<dbReference type="EMBL" id="D32189">
    <property type="protein sequence ID" value="BAA06888.1"/>
    <property type="molecule type" value="Genomic_DNA"/>
</dbReference>
<dbReference type="SMR" id="Q36058"/>
<dbReference type="GO" id="GO:0005743">
    <property type="term" value="C:mitochondrial inner membrane"/>
    <property type="evidence" value="ECO:0007669"/>
    <property type="project" value="UniProtKB-SubCell"/>
</dbReference>
<dbReference type="GO" id="GO:0045275">
    <property type="term" value="C:respiratory chain complex III"/>
    <property type="evidence" value="ECO:0007669"/>
    <property type="project" value="InterPro"/>
</dbReference>
<dbReference type="GO" id="GO:0046872">
    <property type="term" value="F:metal ion binding"/>
    <property type="evidence" value="ECO:0007669"/>
    <property type="project" value="UniProtKB-KW"/>
</dbReference>
<dbReference type="GO" id="GO:0008121">
    <property type="term" value="F:ubiquinol-cytochrome-c reductase activity"/>
    <property type="evidence" value="ECO:0007669"/>
    <property type="project" value="InterPro"/>
</dbReference>
<dbReference type="GO" id="GO:0006122">
    <property type="term" value="P:mitochondrial electron transport, ubiquinol to cytochrome c"/>
    <property type="evidence" value="ECO:0007669"/>
    <property type="project" value="TreeGrafter"/>
</dbReference>
<dbReference type="CDD" id="cd00290">
    <property type="entry name" value="cytochrome_b_C"/>
    <property type="match status" value="1"/>
</dbReference>
<dbReference type="CDD" id="cd00284">
    <property type="entry name" value="Cytochrome_b_N"/>
    <property type="match status" value="1"/>
</dbReference>
<dbReference type="FunFam" id="1.20.810.10:FF:000002">
    <property type="entry name" value="Cytochrome b"/>
    <property type="match status" value="1"/>
</dbReference>
<dbReference type="Gene3D" id="1.20.810.10">
    <property type="entry name" value="Cytochrome Bc1 Complex, Chain C"/>
    <property type="match status" value="1"/>
</dbReference>
<dbReference type="InterPro" id="IPR005798">
    <property type="entry name" value="Cyt_b/b6_C"/>
</dbReference>
<dbReference type="InterPro" id="IPR036150">
    <property type="entry name" value="Cyt_b/b6_C_sf"/>
</dbReference>
<dbReference type="InterPro" id="IPR005797">
    <property type="entry name" value="Cyt_b/b6_N"/>
</dbReference>
<dbReference type="InterPro" id="IPR027387">
    <property type="entry name" value="Cytb/b6-like_sf"/>
</dbReference>
<dbReference type="InterPro" id="IPR030689">
    <property type="entry name" value="Cytochrome_b"/>
</dbReference>
<dbReference type="InterPro" id="IPR048260">
    <property type="entry name" value="Cytochrome_b_C_euk/bac"/>
</dbReference>
<dbReference type="InterPro" id="IPR048259">
    <property type="entry name" value="Cytochrome_b_N_euk/bac"/>
</dbReference>
<dbReference type="InterPro" id="IPR016174">
    <property type="entry name" value="Di-haem_cyt_TM"/>
</dbReference>
<dbReference type="PANTHER" id="PTHR19271">
    <property type="entry name" value="CYTOCHROME B"/>
    <property type="match status" value="1"/>
</dbReference>
<dbReference type="PANTHER" id="PTHR19271:SF16">
    <property type="entry name" value="CYTOCHROME B"/>
    <property type="match status" value="1"/>
</dbReference>
<dbReference type="Pfam" id="PF00032">
    <property type="entry name" value="Cytochrom_B_C"/>
    <property type="match status" value="1"/>
</dbReference>
<dbReference type="Pfam" id="PF00033">
    <property type="entry name" value="Cytochrome_B"/>
    <property type="match status" value="1"/>
</dbReference>
<dbReference type="PIRSF" id="PIRSF038885">
    <property type="entry name" value="COB"/>
    <property type="match status" value="1"/>
</dbReference>
<dbReference type="SUPFAM" id="SSF81648">
    <property type="entry name" value="a domain/subunit of cytochrome bc1 complex (Ubiquinol-cytochrome c reductase)"/>
    <property type="match status" value="1"/>
</dbReference>
<dbReference type="SUPFAM" id="SSF81342">
    <property type="entry name" value="Transmembrane di-heme cytochromes"/>
    <property type="match status" value="1"/>
</dbReference>
<dbReference type="PROSITE" id="PS51003">
    <property type="entry name" value="CYTB_CTER"/>
    <property type="match status" value="1"/>
</dbReference>
<dbReference type="PROSITE" id="PS51002">
    <property type="entry name" value="CYTB_NTER"/>
    <property type="match status" value="1"/>
</dbReference>
<proteinExistence type="inferred from homology"/>
<evidence type="ECO:0000250" key="1"/>
<evidence type="ECO:0000250" key="2">
    <source>
        <dbReference type="UniProtKB" id="P00157"/>
    </source>
</evidence>
<evidence type="ECO:0000255" key="3">
    <source>
        <dbReference type="PROSITE-ProRule" id="PRU00967"/>
    </source>
</evidence>
<evidence type="ECO:0000255" key="4">
    <source>
        <dbReference type="PROSITE-ProRule" id="PRU00968"/>
    </source>
</evidence>
<comment type="function">
    <text evidence="2">Component of the ubiquinol-cytochrome c reductase complex (complex III or cytochrome b-c1 complex) that is part of the mitochondrial respiratory chain. The b-c1 complex mediates electron transfer from ubiquinol to cytochrome c. Contributes to the generation of a proton gradient across the mitochondrial membrane that is then used for ATP synthesis.</text>
</comment>
<comment type="cofactor">
    <cofactor evidence="2">
        <name>heme b</name>
        <dbReference type="ChEBI" id="CHEBI:60344"/>
    </cofactor>
    <text evidence="2">Binds 2 heme b groups non-covalently.</text>
</comment>
<comment type="subunit">
    <text evidence="2">The cytochrome bc1 complex contains 11 subunits: 3 respiratory subunits (MT-CYB, CYC1 and UQCRFS1), 2 core proteins (UQCRC1 and UQCRC2) and 6 low-molecular weight proteins (UQCRH/QCR6, UQCRB/QCR7, UQCRQ/QCR8, UQCR10/QCR9, UQCR11/QCR10 and a cleavage product of UQCRFS1). This cytochrome bc1 complex then forms a dimer.</text>
</comment>
<comment type="subcellular location">
    <subcellularLocation>
        <location evidence="2">Mitochondrion inner membrane</location>
        <topology evidence="2">Multi-pass membrane protein</topology>
    </subcellularLocation>
</comment>
<comment type="miscellaneous">
    <text evidence="1">Heme 1 (or BL or b562) is low-potential and absorbs at about 562 nm, and heme 2 (or BH or b566) is high-potential and absorbs at about 566 nm.</text>
</comment>
<comment type="similarity">
    <text evidence="3 4">Belongs to the cytochrome b family.</text>
</comment>
<comment type="caution">
    <text evidence="2">The full-length protein contains only eight transmembrane helices, not nine as predicted by bioinformatics tools.</text>
</comment>
<gene>
    <name type="primary">MT-CYB</name>
    <name type="synonym">COB</name>
    <name type="synonym">CYTB</name>
    <name type="synonym">MTCYB</name>
</gene>
<geneLocation type="mitochondrion"/>
<protein>
    <recommendedName>
        <fullName>Cytochrome b</fullName>
    </recommendedName>
    <alternativeName>
        <fullName>Complex III subunit 3</fullName>
    </alternativeName>
    <alternativeName>
        <fullName>Complex III subunit III</fullName>
    </alternativeName>
    <alternativeName>
        <fullName>Cytochrome b-c1 complex subunit 3</fullName>
    </alternativeName>
    <alternativeName>
        <fullName>Ubiquinol-cytochrome-c reductase complex cytochrome b subunit</fullName>
    </alternativeName>
</protein>
<accession>Q36058</accession>
<keyword id="KW-0249">Electron transport</keyword>
<keyword id="KW-0349">Heme</keyword>
<keyword id="KW-0408">Iron</keyword>
<keyword id="KW-0472">Membrane</keyword>
<keyword id="KW-0479">Metal-binding</keyword>
<keyword id="KW-0496">Mitochondrion</keyword>
<keyword id="KW-0999">Mitochondrion inner membrane</keyword>
<keyword id="KW-0679">Respiratory chain</keyword>
<keyword id="KW-0812">Transmembrane</keyword>
<keyword id="KW-1133">Transmembrane helix</keyword>
<keyword id="KW-0813">Transport</keyword>
<keyword id="KW-0830">Ubiquinone</keyword>
<reference key="1">
    <citation type="journal article" date="1995" name="J. Mol. Evol.">
        <title>Molecular phylogeny based on the kappa-casein and cytochrome b sequences in the mammalian suborder ruminantia.</title>
        <authorList>
            <person name="Chikuni K."/>
            <person name="Mori Y."/>
            <person name="Tabata T."/>
            <person name="Saito M."/>
            <person name="Monma M."/>
            <person name="Kosugiyama M."/>
        </authorList>
    </citation>
    <scope>NUCLEOTIDE SEQUENCE [GENOMIC DNA]</scope>
    <source>
        <tissue>Muscle</tissue>
    </source>
</reference>
<organism>
    <name type="scientific">Tragulus javanicus</name>
    <name type="common">Lesser Malay chevrotain</name>
    <name type="synonym">Lesser mouse deer</name>
    <dbReference type="NCBI Taxonomy" id="9849"/>
    <lineage>
        <taxon>Eukaryota</taxon>
        <taxon>Metazoa</taxon>
        <taxon>Chordata</taxon>
        <taxon>Craniata</taxon>
        <taxon>Vertebrata</taxon>
        <taxon>Euteleostomi</taxon>
        <taxon>Mammalia</taxon>
        <taxon>Eutheria</taxon>
        <taxon>Laurasiatheria</taxon>
        <taxon>Artiodactyla</taxon>
        <taxon>Ruminantia</taxon>
        <taxon>Tragulina</taxon>
        <taxon>Tragulidae</taxon>
        <taxon>Tragulus</taxon>
    </lineage>
</organism>
<sequence length="379" mass="42634">MINMRKSHPLMKIVNNAFIDLPAPSNISSWWNFGSLLGICLLLQILTGLFLAMHYTSDTSTAFSSVTHICRDVNYGWIIRYMHANGASMFFICLYMHVGRGLYYGSYTFLETWNIGVILLLTVMATAFMGYVLPWGQMSFWGATVITNLLSAIPYIGTDLVEWIWGGFSVDKATLTRFFAFHFILPFIITALVLVHLLFLHETGSNNPTGIPSDADKIPFHPYYTIKDILGVLALFLALMLLVLFSPDLLGDPDNYTPANPLNTPPHIKPEWYFLFAYAILRSIPNKLGGVLALIASILILLLMPLLHTSKQRSMMFRPISQCLFWLLAADLLTLTWIGGQPVEHPYIVIGQLASISYFSIILVLMPVAGMIENKLLKW</sequence>
<name>CYB_TRAJA</name>
<feature type="chain" id="PRO_0000061677" description="Cytochrome b">
    <location>
        <begin position="1"/>
        <end position="379"/>
    </location>
</feature>
<feature type="transmembrane region" description="Helical" evidence="2">
    <location>
        <begin position="33"/>
        <end position="53"/>
    </location>
</feature>
<feature type="transmembrane region" description="Helical" evidence="2">
    <location>
        <begin position="77"/>
        <end position="98"/>
    </location>
</feature>
<feature type="transmembrane region" description="Helical" evidence="2">
    <location>
        <begin position="113"/>
        <end position="133"/>
    </location>
</feature>
<feature type="transmembrane region" description="Helical" evidence="2">
    <location>
        <begin position="178"/>
        <end position="198"/>
    </location>
</feature>
<feature type="transmembrane region" description="Helical" evidence="2">
    <location>
        <begin position="226"/>
        <end position="246"/>
    </location>
</feature>
<feature type="transmembrane region" description="Helical" evidence="2">
    <location>
        <begin position="288"/>
        <end position="308"/>
    </location>
</feature>
<feature type="transmembrane region" description="Helical" evidence="2">
    <location>
        <begin position="320"/>
        <end position="340"/>
    </location>
</feature>
<feature type="transmembrane region" description="Helical" evidence="2">
    <location>
        <begin position="347"/>
        <end position="367"/>
    </location>
</feature>
<feature type="binding site" description="axial binding residue" evidence="2">
    <location>
        <position position="83"/>
    </location>
    <ligand>
        <name>heme b</name>
        <dbReference type="ChEBI" id="CHEBI:60344"/>
        <label>b562</label>
    </ligand>
    <ligandPart>
        <name>Fe</name>
        <dbReference type="ChEBI" id="CHEBI:18248"/>
    </ligandPart>
</feature>
<feature type="binding site" description="axial binding residue" evidence="2">
    <location>
        <position position="97"/>
    </location>
    <ligand>
        <name>heme b</name>
        <dbReference type="ChEBI" id="CHEBI:60344"/>
        <label>b566</label>
    </ligand>
    <ligandPart>
        <name>Fe</name>
        <dbReference type="ChEBI" id="CHEBI:18248"/>
    </ligandPart>
</feature>
<feature type="binding site" description="axial binding residue" evidence="2">
    <location>
        <position position="182"/>
    </location>
    <ligand>
        <name>heme b</name>
        <dbReference type="ChEBI" id="CHEBI:60344"/>
        <label>b562</label>
    </ligand>
    <ligandPart>
        <name>Fe</name>
        <dbReference type="ChEBI" id="CHEBI:18248"/>
    </ligandPart>
</feature>
<feature type="binding site" description="axial binding residue" evidence="2">
    <location>
        <position position="196"/>
    </location>
    <ligand>
        <name>heme b</name>
        <dbReference type="ChEBI" id="CHEBI:60344"/>
        <label>b566</label>
    </ligand>
    <ligandPart>
        <name>Fe</name>
        <dbReference type="ChEBI" id="CHEBI:18248"/>
    </ligandPart>
</feature>
<feature type="binding site" evidence="2">
    <location>
        <position position="201"/>
    </location>
    <ligand>
        <name>a ubiquinone</name>
        <dbReference type="ChEBI" id="CHEBI:16389"/>
    </ligand>
</feature>